<gene>
    <name evidence="1" type="primary">adk</name>
    <name type="ordered locus">lpl1362</name>
</gene>
<organism>
    <name type="scientific">Legionella pneumophila (strain Lens)</name>
    <dbReference type="NCBI Taxonomy" id="297245"/>
    <lineage>
        <taxon>Bacteria</taxon>
        <taxon>Pseudomonadati</taxon>
        <taxon>Pseudomonadota</taxon>
        <taxon>Gammaproteobacteria</taxon>
        <taxon>Legionellales</taxon>
        <taxon>Legionellaceae</taxon>
        <taxon>Legionella</taxon>
    </lineage>
</organism>
<sequence length="218" mass="24106">MRLMLLGGPGAGKGTQASLLINRYKIPQISTGDMLRAAIAKGTPLGLSAQKIMESGGLVSDDIIIGLVKERLKNPDCDRGFLFDGFPRTLVQAEALKDAEIHLDHVIEIAVDDEEIIERISGRRIHQPSGRVYHVVNQPPKNPGVDDITGEPLIQRDDDKEETIRKRLQVYHSQTAPLVQYYKEWAESGSKEAPKFHTISGTGTVDQIFDNIVTILET</sequence>
<reference key="1">
    <citation type="journal article" date="2004" name="Nat. Genet.">
        <title>Evidence in the Legionella pneumophila genome for exploitation of host cell functions and high genome plasticity.</title>
        <authorList>
            <person name="Cazalet C."/>
            <person name="Rusniok C."/>
            <person name="Brueggemann H."/>
            <person name="Zidane N."/>
            <person name="Magnier A."/>
            <person name="Ma L."/>
            <person name="Tichit M."/>
            <person name="Jarraud S."/>
            <person name="Bouchier C."/>
            <person name="Vandenesch F."/>
            <person name="Kunst F."/>
            <person name="Etienne J."/>
            <person name="Glaser P."/>
            <person name="Buchrieser C."/>
        </authorList>
    </citation>
    <scope>NUCLEOTIDE SEQUENCE [LARGE SCALE GENOMIC DNA]</scope>
    <source>
        <strain>Lens</strain>
    </source>
</reference>
<keyword id="KW-0067">ATP-binding</keyword>
<keyword id="KW-0963">Cytoplasm</keyword>
<keyword id="KW-0418">Kinase</keyword>
<keyword id="KW-0545">Nucleotide biosynthesis</keyword>
<keyword id="KW-0547">Nucleotide-binding</keyword>
<keyword id="KW-0808">Transferase</keyword>
<dbReference type="EC" id="2.7.4.3" evidence="1"/>
<dbReference type="EMBL" id="CR628337">
    <property type="protein sequence ID" value="CAH15602.1"/>
    <property type="molecule type" value="Genomic_DNA"/>
</dbReference>
<dbReference type="RefSeq" id="WP_011215427.1">
    <property type="nucleotide sequence ID" value="NC_006369.1"/>
</dbReference>
<dbReference type="SMR" id="Q5WWT7"/>
<dbReference type="KEGG" id="lpf:lpl1362"/>
<dbReference type="LegioList" id="lpl1362"/>
<dbReference type="HOGENOM" id="CLU_032354_1_2_6"/>
<dbReference type="UniPathway" id="UPA00588">
    <property type="reaction ID" value="UER00649"/>
</dbReference>
<dbReference type="Proteomes" id="UP000002517">
    <property type="component" value="Chromosome"/>
</dbReference>
<dbReference type="GO" id="GO:0005737">
    <property type="term" value="C:cytoplasm"/>
    <property type="evidence" value="ECO:0007669"/>
    <property type="project" value="UniProtKB-SubCell"/>
</dbReference>
<dbReference type="GO" id="GO:0004017">
    <property type="term" value="F:adenylate kinase activity"/>
    <property type="evidence" value="ECO:0007669"/>
    <property type="project" value="UniProtKB-UniRule"/>
</dbReference>
<dbReference type="GO" id="GO:0005524">
    <property type="term" value="F:ATP binding"/>
    <property type="evidence" value="ECO:0007669"/>
    <property type="project" value="UniProtKB-UniRule"/>
</dbReference>
<dbReference type="GO" id="GO:0044209">
    <property type="term" value="P:AMP salvage"/>
    <property type="evidence" value="ECO:0007669"/>
    <property type="project" value="UniProtKB-UniRule"/>
</dbReference>
<dbReference type="CDD" id="cd01428">
    <property type="entry name" value="ADK"/>
    <property type="match status" value="1"/>
</dbReference>
<dbReference type="FunFam" id="3.40.50.300:FF:000106">
    <property type="entry name" value="Adenylate kinase mitochondrial"/>
    <property type="match status" value="1"/>
</dbReference>
<dbReference type="Gene3D" id="3.40.50.300">
    <property type="entry name" value="P-loop containing nucleotide triphosphate hydrolases"/>
    <property type="match status" value="1"/>
</dbReference>
<dbReference type="HAMAP" id="MF_00235">
    <property type="entry name" value="Adenylate_kinase_Adk"/>
    <property type="match status" value="1"/>
</dbReference>
<dbReference type="InterPro" id="IPR006259">
    <property type="entry name" value="Adenyl_kin_sub"/>
</dbReference>
<dbReference type="InterPro" id="IPR000850">
    <property type="entry name" value="Adenylat/UMP-CMP_kin"/>
</dbReference>
<dbReference type="InterPro" id="IPR033690">
    <property type="entry name" value="Adenylat_kinase_CS"/>
</dbReference>
<dbReference type="InterPro" id="IPR007862">
    <property type="entry name" value="Adenylate_kinase_lid-dom"/>
</dbReference>
<dbReference type="InterPro" id="IPR027417">
    <property type="entry name" value="P-loop_NTPase"/>
</dbReference>
<dbReference type="NCBIfam" id="TIGR01351">
    <property type="entry name" value="adk"/>
    <property type="match status" value="1"/>
</dbReference>
<dbReference type="NCBIfam" id="NF001379">
    <property type="entry name" value="PRK00279.1-1"/>
    <property type="match status" value="1"/>
</dbReference>
<dbReference type="NCBIfam" id="NF001380">
    <property type="entry name" value="PRK00279.1-2"/>
    <property type="match status" value="1"/>
</dbReference>
<dbReference type="NCBIfam" id="NF001381">
    <property type="entry name" value="PRK00279.1-3"/>
    <property type="match status" value="1"/>
</dbReference>
<dbReference type="NCBIfam" id="NF011100">
    <property type="entry name" value="PRK14527.1"/>
    <property type="match status" value="1"/>
</dbReference>
<dbReference type="PANTHER" id="PTHR23359">
    <property type="entry name" value="NUCLEOTIDE KINASE"/>
    <property type="match status" value="1"/>
</dbReference>
<dbReference type="Pfam" id="PF00406">
    <property type="entry name" value="ADK"/>
    <property type="match status" value="1"/>
</dbReference>
<dbReference type="Pfam" id="PF05191">
    <property type="entry name" value="ADK_lid"/>
    <property type="match status" value="1"/>
</dbReference>
<dbReference type="PRINTS" id="PR00094">
    <property type="entry name" value="ADENYLTKNASE"/>
</dbReference>
<dbReference type="SUPFAM" id="SSF52540">
    <property type="entry name" value="P-loop containing nucleoside triphosphate hydrolases"/>
    <property type="match status" value="1"/>
</dbReference>
<dbReference type="PROSITE" id="PS00113">
    <property type="entry name" value="ADENYLATE_KINASE"/>
    <property type="match status" value="1"/>
</dbReference>
<proteinExistence type="inferred from homology"/>
<protein>
    <recommendedName>
        <fullName evidence="1">Adenylate kinase</fullName>
        <shortName evidence="1">AK</shortName>
        <ecNumber evidence="1">2.7.4.3</ecNumber>
    </recommendedName>
    <alternativeName>
        <fullName evidence="1">ATP-AMP transphosphorylase</fullName>
    </alternativeName>
    <alternativeName>
        <fullName evidence="1">ATP:AMP phosphotransferase</fullName>
    </alternativeName>
    <alternativeName>
        <fullName evidence="1">Adenylate monophosphate kinase</fullName>
    </alternativeName>
</protein>
<accession>Q5WWT7</accession>
<feature type="chain" id="PRO_1000058848" description="Adenylate kinase">
    <location>
        <begin position="1"/>
        <end position="218"/>
    </location>
</feature>
<feature type="region of interest" description="NMP" evidence="1">
    <location>
        <begin position="30"/>
        <end position="59"/>
    </location>
</feature>
<feature type="region of interest" description="LID" evidence="1">
    <location>
        <begin position="122"/>
        <end position="159"/>
    </location>
</feature>
<feature type="binding site" evidence="1">
    <location>
        <begin position="10"/>
        <end position="15"/>
    </location>
    <ligand>
        <name>ATP</name>
        <dbReference type="ChEBI" id="CHEBI:30616"/>
    </ligand>
</feature>
<feature type="binding site" evidence="1">
    <location>
        <position position="31"/>
    </location>
    <ligand>
        <name>AMP</name>
        <dbReference type="ChEBI" id="CHEBI:456215"/>
    </ligand>
</feature>
<feature type="binding site" evidence="1">
    <location>
        <position position="36"/>
    </location>
    <ligand>
        <name>AMP</name>
        <dbReference type="ChEBI" id="CHEBI:456215"/>
    </ligand>
</feature>
<feature type="binding site" evidence="1">
    <location>
        <begin position="57"/>
        <end position="59"/>
    </location>
    <ligand>
        <name>AMP</name>
        <dbReference type="ChEBI" id="CHEBI:456215"/>
    </ligand>
</feature>
<feature type="binding site" evidence="1">
    <location>
        <begin position="85"/>
        <end position="88"/>
    </location>
    <ligand>
        <name>AMP</name>
        <dbReference type="ChEBI" id="CHEBI:456215"/>
    </ligand>
</feature>
<feature type="binding site" evidence="1">
    <location>
        <position position="92"/>
    </location>
    <ligand>
        <name>AMP</name>
        <dbReference type="ChEBI" id="CHEBI:456215"/>
    </ligand>
</feature>
<feature type="binding site" evidence="1">
    <location>
        <position position="123"/>
    </location>
    <ligand>
        <name>ATP</name>
        <dbReference type="ChEBI" id="CHEBI:30616"/>
    </ligand>
</feature>
<feature type="binding site" evidence="1">
    <location>
        <begin position="132"/>
        <end position="133"/>
    </location>
    <ligand>
        <name>ATP</name>
        <dbReference type="ChEBI" id="CHEBI:30616"/>
    </ligand>
</feature>
<feature type="binding site" evidence="1">
    <location>
        <position position="156"/>
    </location>
    <ligand>
        <name>AMP</name>
        <dbReference type="ChEBI" id="CHEBI:456215"/>
    </ligand>
</feature>
<feature type="binding site" evidence="1">
    <location>
        <position position="167"/>
    </location>
    <ligand>
        <name>AMP</name>
        <dbReference type="ChEBI" id="CHEBI:456215"/>
    </ligand>
</feature>
<feature type="binding site" evidence="1">
    <location>
        <position position="203"/>
    </location>
    <ligand>
        <name>ATP</name>
        <dbReference type="ChEBI" id="CHEBI:30616"/>
    </ligand>
</feature>
<comment type="function">
    <text evidence="1">Catalyzes the reversible transfer of the terminal phosphate group between ATP and AMP. Plays an important role in cellular energy homeostasis and in adenine nucleotide metabolism.</text>
</comment>
<comment type="catalytic activity">
    <reaction evidence="1">
        <text>AMP + ATP = 2 ADP</text>
        <dbReference type="Rhea" id="RHEA:12973"/>
        <dbReference type="ChEBI" id="CHEBI:30616"/>
        <dbReference type="ChEBI" id="CHEBI:456215"/>
        <dbReference type="ChEBI" id="CHEBI:456216"/>
        <dbReference type="EC" id="2.7.4.3"/>
    </reaction>
</comment>
<comment type="pathway">
    <text evidence="1">Purine metabolism; AMP biosynthesis via salvage pathway; AMP from ADP: step 1/1.</text>
</comment>
<comment type="subunit">
    <text evidence="1">Monomer.</text>
</comment>
<comment type="subcellular location">
    <subcellularLocation>
        <location evidence="1">Cytoplasm</location>
    </subcellularLocation>
</comment>
<comment type="domain">
    <text evidence="1">Consists of three domains, a large central CORE domain and two small peripheral domains, NMPbind and LID, which undergo movements during catalysis. The LID domain closes over the site of phosphoryl transfer upon ATP binding. Assembling and dissambling the active center during each catalytic cycle provides an effective means to prevent ATP hydrolysis.</text>
</comment>
<comment type="similarity">
    <text evidence="1">Belongs to the adenylate kinase family.</text>
</comment>
<evidence type="ECO:0000255" key="1">
    <source>
        <dbReference type="HAMAP-Rule" id="MF_00235"/>
    </source>
</evidence>
<name>KAD_LEGPL</name>